<protein>
    <recommendedName>
        <fullName evidence="1">Sugar fermentation stimulation protein homolog</fullName>
    </recommendedName>
</protein>
<dbReference type="EMBL" id="CP000633">
    <property type="protein sequence ID" value="ACM36627.1"/>
    <property type="molecule type" value="Genomic_DNA"/>
</dbReference>
<dbReference type="RefSeq" id="WP_015916048.1">
    <property type="nucleotide sequence ID" value="NC_011989.1"/>
</dbReference>
<dbReference type="SMR" id="B9JWJ9"/>
<dbReference type="STRING" id="311402.Avi_2275"/>
<dbReference type="DNASU" id="7386364"/>
<dbReference type="KEGG" id="avi:Avi_2275"/>
<dbReference type="eggNOG" id="COG1489">
    <property type="taxonomic scope" value="Bacteria"/>
</dbReference>
<dbReference type="HOGENOM" id="CLU_052299_2_0_5"/>
<dbReference type="Proteomes" id="UP000001596">
    <property type="component" value="Chromosome 1"/>
</dbReference>
<dbReference type="GO" id="GO:0003677">
    <property type="term" value="F:DNA binding"/>
    <property type="evidence" value="ECO:0007669"/>
    <property type="project" value="InterPro"/>
</dbReference>
<dbReference type="CDD" id="cd22359">
    <property type="entry name" value="SfsA-like_bacterial"/>
    <property type="match status" value="1"/>
</dbReference>
<dbReference type="Gene3D" id="2.40.50.580">
    <property type="match status" value="1"/>
</dbReference>
<dbReference type="Gene3D" id="3.40.1350.60">
    <property type="match status" value="1"/>
</dbReference>
<dbReference type="HAMAP" id="MF_00095">
    <property type="entry name" value="SfsA"/>
    <property type="match status" value="1"/>
</dbReference>
<dbReference type="InterPro" id="IPR005224">
    <property type="entry name" value="SfsA"/>
</dbReference>
<dbReference type="InterPro" id="IPR040452">
    <property type="entry name" value="SfsA_C"/>
</dbReference>
<dbReference type="InterPro" id="IPR041465">
    <property type="entry name" value="SfsA_N"/>
</dbReference>
<dbReference type="NCBIfam" id="TIGR00230">
    <property type="entry name" value="sfsA"/>
    <property type="match status" value="1"/>
</dbReference>
<dbReference type="PANTHER" id="PTHR30545">
    <property type="entry name" value="SUGAR FERMENTATION STIMULATION PROTEIN A"/>
    <property type="match status" value="1"/>
</dbReference>
<dbReference type="PANTHER" id="PTHR30545:SF2">
    <property type="entry name" value="SUGAR FERMENTATION STIMULATION PROTEIN A"/>
    <property type="match status" value="1"/>
</dbReference>
<dbReference type="Pfam" id="PF03749">
    <property type="entry name" value="SfsA"/>
    <property type="match status" value="1"/>
</dbReference>
<dbReference type="Pfam" id="PF17746">
    <property type="entry name" value="SfsA_N"/>
    <property type="match status" value="1"/>
</dbReference>
<accession>B9JWJ9</accession>
<evidence type="ECO:0000255" key="1">
    <source>
        <dbReference type="HAMAP-Rule" id="MF_00095"/>
    </source>
</evidence>
<name>SFSA_ALLAM</name>
<keyword id="KW-1185">Reference proteome</keyword>
<comment type="similarity">
    <text evidence="1">Belongs to the SfsA family.</text>
</comment>
<feature type="chain" id="PRO_1000196958" description="Sugar fermentation stimulation protein homolog">
    <location>
        <begin position="1"/>
        <end position="235"/>
    </location>
</feature>
<proteinExistence type="inferred from homology"/>
<sequence length="235" mass="25617">MTFDPPLVAATLVRRYKRFLFDAVLEDGSDITGFCANTGSMRGLTTPGSRIYLSQSDRPGRKYRYGFELIEADGTLVGVNTSLPNRLAHEAIRAGLVSDLLHYPQIRTEQRYGENSRIDLLLSGSGKADCYVEVKNVHFIRETGLAEFPDSVTTRGAKHLTEMAKLVAAGKRAAMLYVIQRQDCDALAICADLDPVYGRAFTAAISQGVEAYAVKCAITPRGIIPACGVPVRLTV</sequence>
<reference key="1">
    <citation type="journal article" date="2009" name="J. Bacteriol.">
        <title>Genome sequences of three Agrobacterium biovars help elucidate the evolution of multichromosome genomes in bacteria.</title>
        <authorList>
            <person name="Slater S.C."/>
            <person name="Goldman B.S."/>
            <person name="Goodner B."/>
            <person name="Setubal J.C."/>
            <person name="Farrand S.K."/>
            <person name="Nester E.W."/>
            <person name="Burr T.J."/>
            <person name="Banta L."/>
            <person name="Dickerman A.W."/>
            <person name="Paulsen I."/>
            <person name="Otten L."/>
            <person name="Suen G."/>
            <person name="Welch R."/>
            <person name="Almeida N.F."/>
            <person name="Arnold F."/>
            <person name="Burton O.T."/>
            <person name="Du Z."/>
            <person name="Ewing A."/>
            <person name="Godsy E."/>
            <person name="Heisel S."/>
            <person name="Houmiel K.L."/>
            <person name="Jhaveri J."/>
            <person name="Lu J."/>
            <person name="Miller N.M."/>
            <person name="Norton S."/>
            <person name="Chen Q."/>
            <person name="Phoolcharoen W."/>
            <person name="Ohlin V."/>
            <person name="Ondrusek D."/>
            <person name="Pride N."/>
            <person name="Stricklin S.L."/>
            <person name="Sun J."/>
            <person name="Wheeler C."/>
            <person name="Wilson L."/>
            <person name="Zhu H."/>
            <person name="Wood D.W."/>
        </authorList>
    </citation>
    <scope>NUCLEOTIDE SEQUENCE [LARGE SCALE GENOMIC DNA]</scope>
    <source>
        <strain>ATCC BAA-846 / DSM 112012 / S4</strain>
    </source>
</reference>
<gene>
    <name evidence="1" type="primary">sfsA</name>
    <name type="ordered locus">Avi_2275</name>
</gene>
<organism>
    <name type="scientific">Allorhizobium ampelinum (strain ATCC BAA-846 / DSM 112012 / S4)</name>
    <name type="common">Agrobacterium vitis (strain S4)</name>
    <dbReference type="NCBI Taxonomy" id="311402"/>
    <lineage>
        <taxon>Bacteria</taxon>
        <taxon>Pseudomonadati</taxon>
        <taxon>Pseudomonadota</taxon>
        <taxon>Alphaproteobacteria</taxon>
        <taxon>Hyphomicrobiales</taxon>
        <taxon>Rhizobiaceae</taxon>
        <taxon>Rhizobium/Agrobacterium group</taxon>
        <taxon>Allorhizobium</taxon>
        <taxon>Allorhizobium ampelinum</taxon>
    </lineage>
</organism>